<accession>Q6L3A7</accession>
<reference key="1">
    <citation type="journal article" date="2004" name="Curr. Genet.">
        <title>Structural features and transcript-editing analysis of sugarcane (Saccharum officinarum L.) chloroplast genome.</title>
        <authorList>
            <person name="Calsa T. Jr."/>
            <person name="Carraro D.M."/>
            <person name="Benatti M.R."/>
            <person name="Barbosa A.C."/>
            <person name="Kitajima J.P."/>
            <person name="Carrer H."/>
        </authorList>
    </citation>
    <scope>NUCLEOTIDE SEQUENCE [LARGE SCALE GENOMIC DNA]</scope>
    <scope>RNA EDITING</scope>
    <source>
        <strain>cv. SP-80-3280</strain>
    </source>
</reference>
<organism>
    <name type="scientific">Saccharum hybrid</name>
    <name type="common">Sugarcane</name>
    <dbReference type="NCBI Taxonomy" id="15819"/>
    <lineage>
        <taxon>Eukaryota</taxon>
        <taxon>Viridiplantae</taxon>
        <taxon>Streptophyta</taxon>
        <taxon>Embryophyta</taxon>
        <taxon>Tracheophyta</taxon>
        <taxon>Spermatophyta</taxon>
        <taxon>Magnoliopsida</taxon>
        <taxon>Liliopsida</taxon>
        <taxon>Poales</taxon>
        <taxon>Poaceae</taxon>
        <taxon>PACMAD clade</taxon>
        <taxon>Panicoideae</taxon>
        <taxon>Andropogonodae</taxon>
        <taxon>Andropogoneae</taxon>
        <taxon>Saccharinae</taxon>
        <taxon>Saccharum</taxon>
    </lineage>
</organism>
<proteinExistence type="evidence at transcript level"/>
<gene>
    <name evidence="1" type="primary">rpoB</name>
    <name type="ordered locus">PS106</name>
</gene>
<evidence type="ECO:0000255" key="1">
    <source>
        <dbReference type="HAMAP-Rule" id="MF_01321"/>
    </source>
</evidence>
<evidence type="ECO:0000269" key="2">
    <source>
    </source>
</evidence>
<protein>
    <recommendedName>
        <fullName evidence="1">DNA-directed RNA polymerase subunit beta</fullName>
        <ecNumber evidence="1">2.7.7.6</ecNumber>
    </recommendedName>
    <alternativeName>
        <fullName evidence="1">PEP</fullName>
    </alternativeName>
    <alternativeName>
        <fullName evidence="1">Plastid-encoded RNA polymerase subunit beta</fullName>
        <shortName evidence="1">RNA polymerase subunit beta</shortName>
    </alternativeName>
</protein>
<comment type="function">
    <text evidence="1">DNA-dependent RNA polymerase catalyzes the transcription of DNA into RNA using the four ribonucleoside triphosphates as substrates.</text>
</comment>
<comment type="catalytic activity">
    <reaction evidence="1">
        <text>RNA(n) + a ribonucleoside 5'-triphosphate = RNA(n+1) + diphosphate</text>
        <dbReference type="Rhea" id="RHEA:21248"/>
        <dbReference type="Rhea" id="RHEA-COMP:14527"/>
        <dbReference type="Rhea" id="RHEA-COMP:17342"/>
        <dbReference type="ChEBI" id="CHEBI:33019"/>
        <dbReference type="ChEBI" id="CHEBI:61557"/>
        <dbReference type="ChEBI" id="CHEBI:140395"/>
        <dbReference type="EC" id="2.7.7.6"/>
    </reaction>
</comment>
<comment type="subunit">
    <text evidence="1">In plastids the minimal PEP RNA polymerase catalytic core is composed of four subunits: alpha, beta, beta', and beta''. When a (nuclear-encoded) sigma factor is associated with the core the holoenzyme is formed, which can initiate transcription.</text>
</comment>
<comment type="subcellular location">
    <subcellularLocation>
        <location>Plastid</location>
        <location>Chloroplast</location>
    </subcellularLocation>
</comment>
<comment type="RNA editing">
    <location>
        <position position="156" evidence="2"/>
    </location>
    <location>
        <position position="182" evidence="2"/>
    </location>
    <location>
        <position position="187" evidence="2"/>
    </location>
    <location>
        <position position="206" evidence="2"/>
    </location>
</comment>
<comment type="similarity">
    <text evidence="1">Belongs to the RNA polymerase beta chain family.</text>
</comment>
<sequence>MLRNGNEGMSTIPGFSQIQFEGFCRFINQGLAEELEKFPTIKDPDHEIAFQLFAKGYQLLEPSIKERNAVYESLTYSSELYVSARLIFGFDVQKQTISIGNIPIMNSLGTFIINGIYRIVINQILLSPGIYYRSELDHKGISICTGTIISDWGGRLELAIDKKERIWARVSRKQKISILVLLSAMGLNLREILDNVSYPEIFLSFLNAKEKKRIESKEKAILEFYQQFACVGGDLVFSESLCEELQKKFFQQKCELGRVGRRNMNRRLNLDIPQNNTFLLPRDVLAATDHLIGMKFGTGILDDDDMNHLKNKRIRSVADLLQDQFGLALGRLQHAVQKTIRRVFIRQSKPTPQTLVTPTSTSILLITTYETFFGTYPLAQVFDQTNPLTQTVHGRKVSCLGPGGLTGRTASFRSRDIHPSHYGRICPIDTSEGINVGLTGSLAIHARIDHWWGSIESPFYEISEKAKEKKERQVVYLSPNRDEYYMIAAGNSLSLNQGIQEEQVVPARYRQEFLTIAWEQIHVRSIFPFQYFSIGGSLIPFIEHNDANRALMSSNMQRQAVPLSRSEKCIVGTGLERQTALDSRVSVIAEREGKIISSDSHKILLSSSGKTISIPLVAHRRSNKNTCMHQKPRVPRGKSIKKGQILAEGAATVGGELALGKNVLVAYMPWEGYNFEDAVLISERLVYEDIYTSFHIRKYEIQTDTTSQGSAEKITKQIPHLEEHLLRNLDRNGVVRLGSWVETGDILVGKLTPQIASESSYIAEAGLLRAIFGLEVSTSKETSLKLPIGGRGRVIDVKWIQRDPFDIMVRVYILQKREIKVGDKVAGRHGNKGIISKILPRQDMPYLQDGTPVDMVFNPLGVPSRMNVGQIFESSLGLAGDLLKKHYRIAPFDERYEQEASRKLVFSELYEASKQTKNPWVFEPEYPGKSRIFDGRTGDPFEQPVLIGKSYILKLIHQVDEKIHGRSTGPYSLVTQQPVRGRAKQGGQRIGEMEVWALEGFGVAHILQEILTYKSDHLIARQEILNATIWGKRVPNHEDPPESFRVLVRELRSLALELNHFLVSEKNFRVNREDV</sequence>
<feature type="chain" id="PRO_0000048044" description="DNA-directed RNA polymerase subunit beta">
    <location>
        <begin position="1"/>
        <end position="1075"/>
    </location>
</feature>
<geneLocation type="chloroplast"/>
<name>RPOB_SACHY</name>
<dbReference type="EC" id="2.7.7.6" evidence="1"/>
<dbReference type="EMBL" id="AE009947">
    <property type="protein sequence ID" value="AAT44685.1"/>
    <property type="status" value="ALT_SEQ"/>
    <property type="molecule type" value="Genomic_DNA"/>
</dbReference>
<dbReference type="SMR" id="Q6L3A7"/>
<dbReference type="GO" id="GO:0009507">
    <property type="term" value="C:chloroplast"/>
    <property type="evidence" value="ECO:0007669"/>
    <property type="project" value="UniProtKB-SubCell"/>
</dbReference>
<dbReference type="GO" id="GO:0000428">
    <property type="term" value="C:DNA-directed RNA polymerase complex"/>
    <property type="evidence" value="ECO:0007669"/>
    <property type="project" value="UniProtKB-KW"/>
</dbReference>
<dbReference type="GO" id="GO:0005739">
    <property type="term" value="C:mitochondrion"/>
    <property type="evidence" value="ECO:0007669"/>
    <property type="project" value="GOC"/>
</dbReference>
<dbReference type="GO" id="GO:0003677">
    <property type="term" value="F:DNA binding"/>
    <property type="evidence" value="ECO:0007669"/>
    <property type="project" value="UniProtKB-UniRule"/>
</dbReference>
<dbReference type="GO" id="GO:0003899">
    <property type="term" value="F:DNA-directed RNA polymerase activity"/>
    <property type="evidence" value="ECO:0007669"/>
    <property type="project" value="UniProtKB-UniRule"/>
</dbReference>
<dbReference type="GO" id="GO:0032549">
    <property type="term" value="F:ribonucleoside binding"/>
    <property type="evidence" value="ECO:0007669"/>
    <property type="project" value="InterPro"/>
</dbReference>
<dbReference type="GO" id="GO:0006351">
    <property type="term" value="P:DNA-templated transcription"/>
    <property type="evidence" value="ECO:0007669"/>
    <property type="project" value="UniProtKB-UniRule"/>
</dbReference>
<dbReference type="CDD" id="cd00653">
    <property type="entry name" value="RNA_pol_B_RPB2"/>
    <property type="match status" value="1"/>
</dbReference>
<dbReference type="Gene3D" id="2.40.50.100">
    <property type="match status" value="1"/>
</dbReference>
<dbReference type="Gene3D" id="2.40.50.150">
    <property type="match status" value="1"/>
</dbReference>
<dbReference type="Gene3D" id="3.90.1100.10">
    <property type="match status" value="1"/>
</dbReference>
<dbReference type="Gene3D" id="2.30.150.10">
    <property type="entry name" value="DNA-directed RNA polymerase, beta subunit, external 1 domain"/>
    <property type="match status" value="1"/>
</dbReference>
<dbReference type="Gene3D" id="2.40.270.10">
    <property type="entry name" value="DNA-directed RNA polymerase, subunit 2, domain 6"/>
    <property type="match status" value="1"/>
</dbReference>
<dbReference type="Gene3D" id="3.90.1800.10">
    <property type="entry name" value="RNA polymerase alpha subunit dimerisation domain"/>
    <property type="match status" value="1"/>
</dbReference>
<dbReference type="Gene3D" id="3.90.1110.10">
    <property type="entry name" value="RNA polymerase Rpb2, domain 2"/>
    <property type="match status" value="1"/>
</dbReference>
<dbReference type="HAMAP" id="MF_01321">
    <property type="entry name" value="RNApol_bact_RpoB"/>
    <property type="match status" value="1"/>
</dbReference>
<dbReference type="InterPro" id="IPR042107">
    <property type="entry name" value="DNA-dir_RNA_pol_bsu_ext_1_sf"/>
</dbReference>
<dbReference type="InterPro" id="IPR015712">
    <property type="entry name" value="DNA-dir_RNA_pol_su2"/>
</dbReference>
<dbReference type="InterPro" id="IPR007120">
    <property type="entry name" value="DNA-dir_RNAP_su2_dom"/>
</dbReference>
<dbReference type="InterPro" id="IPR037033">
    <property type="entry name" value="DNA-dir_RNAP_su2_hyb_sf"/>
</dbReference>
<dbReference type="InterPro" id="IPR010243">
    <property type="entry name" value="RNA_pol_bsu_bac"/>
</dbReference>
<dbReference type="InterPro" id="IPR007121">
    <property type="entry name" value="RNA_pol_bsu_CS"/>
</dbReference>
<dbReference type="InterPro" id="IPR007642">
    <property type="entry name" value="RNA_pol_Rpb2_2"/>
</dbReference>
<dbReference type="InterPro" id="IPR037034">
    <property type="entry name" value="RNA_pol_Rpb2_2_sf"/>
</dbReference>
<dbReference type="InterPro" id="IPR007645">
    <property type="entry name" value="RNA_pol_Rpb2_3"/>
</dbReference>
<dbReference type="InterPro" id="IPR007641">
    <property type="entry name" value="RNA_pol_Rpb2_7"/>
</dbReference>
<dbReference type="InterPro" id="IPR014724">
    <property type="entry name" value="RNA_pol_RPB2_OB-fold"/>
</dbReference>
<dbReference type="NCBIfam" id="NF001616">
    <property type="entry name" value="PRK00405.1"/>
    <property type="match status" value="1"/>
</dbReference>
<dbReference type="PANTHER" id="PTHR20856">
    <property type="entry name" value="DNA-DIRECTED RNA POLYMERASE I SUBUNIT 2"/>
    <property type="match status" value="1"/>
</dbReference>
<dbReference type="Pfam" id="PF04561">
    <property type="entry name" value="RNA_pol_Rpb2_2"/>
    <property type="match status" value="1"/>
</dbReference>
<dbReference type="Pfam" id="PF04565">
    <property type="entry name" value="RNA_pol_Rpb2_3"/>
    <property type="match status" value="1"/>
</dbReference>
<dbReference type="Pfam" id="PF00562">
    <property type="entry name" value="RNA_pol_Rpb2_6"/>
    <property type="match status" value="1"/>
</dbReference>
<dbReference type="Pfam" id="PF04560">
    <property type="entry name" value="RNA_pol_Rpb2_7"/>
    <property type="match status" value="1"/>
</dbReference>
<dbReference type="SUPFAM" id="SSF64484">
    <property type="entry name" value="beta and beta-prime subunits of DNA dependent RNA-polymerase"/>
    <property type="match status" value="1"/>
</dbReference>
<dbReference type="PROSITE" id="PS01166">
    <property type="entry name" value="RNA_POL_BETA"/>
    <property type="match status" value="1"/>
</dbReference>
<keyword id="KW-0150">Chloroplast</keyword>
<keyword id="KW-0240">DNA-directed RNA polymerase</keyword>
<keyword id="KW-0548">Nucleotidyltransferase</keyword>
<keyword id="KW-0934">Plastid</keyword>
<keyword id="KW-0691">RNA editing</keyword>
<keyword id="KW-0804">Transcription</keyword>
<keyword id="KW-0808">Transferase</keyword>